<keyword id="KW-0002">3D-structure</keyword>
<keyword id="KW-1003">Cell membrane</keyword>
<keyword id="KW-0963">Cytoplasm</keyword>
<keyword id="KW-0968">Cytoplasmic vesicle</keyword>
<keyword id="KW-0217">Developmental protein</keyword>
<keyword id="KW-0472">Membrane</keyword>
<keyword id="KW-0597">Phosphoprotein</keyword>
<keyword id="KW-1185">Reference proteome</keyword>
<keyword id="KW-0832">Ubl conjugation</keyword>
<keyword id="KW-0879">Wnt signaling pathway</keyword>
<feature type="chain" id="PRO_0000145743" description="Segment polarity protein dishevelled homolog DVL-1">
    <location>
        <begin position="1"/>
        <end position="695"/>
    </location>
</feature>
<feature type="domain" description="DIX" evidence="5">
    <location>
        <begin position="1"/>
        <end position="85"/>
    </location>
</feature>
<feature type="domain" description="PDZ" evidence="6">
    <location>
        <begin position="251"/>
        <end position="323"/>
    </location>
</feature>
<feature type="domain" description="DEP" evidence="4">
    <location>
        <begin position="425"/>
        <end position="499"/>
    </location>
</feature>
<feature type="region of interest" description="Disordered" evidence="7">
    <location>
        <begin position="89"/>
        <end position="235"/>
    </location>
</feature>
<feature type="region of interest" description="Disordered" evidence="7">
    <location>
        <begin position="559"/>
        <end position="641"/>
    </location>
</feature>
<feature type="compositionally biased region" description="Basic residues" evidence="7">
    <location>
        <begin position="142"/>
        <end position="151"/>
    </location>
</feature>
<feature type="compositionally biased region" description="Basic and acidic residues" evidence="7">
    <location>
        <begin position="152"/>
        <end position="171"/>
    </location>
</feature>
<feature type="compositionally biased region" description="Low complexity" evidence="7">
    <location>
        <begin position="177"/>
        <end position="192"/>
    </location>
</feature>
<feature type="compositionally biased region" description="Low complexity" evidence="7">
    <location>
        <begin position="201"/>
        <end position="214"/>
    </location>
</feature>
<feature type="compositionally biased region" description="Basic residues" evidence="7">
    <location>
        <begin position="215"/>
        <end position="228"/>
    </location>
</feature>
<feature type="compositionally biased region" description="Low complexity" evidence="7">
    <location>
        <begin position="559"/>
        <end position="580"/>
    </location>
</feature>
<feature type="compositionally biased region" description="Polar residues" evidence="7">
    <location>
        <begin position="622"/>
        <end position="635"/>
    </location>
</feature>
<feature type="modified residue" description="Phosphoserine" evidence="3">
    <location>
        <position position="194"/>
    </location>
</feature>
<feature type="mutagenesis site" description="Loss of oligomerization." evidence="18">
    <original>Y</original>
    <variation>D</variation>
    <location>
        <position position="17"/>
    </location>
</feature>
<feature type="mutagenesis site" description="Strongly reduces activity in Wnt signaling. Abolishes location at the cell membrane." evidence="8 12">
    <original>K</original>
    <variation>M</variation>
    <location>
        <position position="438"/>
    </location>
</feature>
<feature type="mutagenesis site" description="Reduces activity in Wnt signaling; when associated with I-452." evidence="8">
    <original>D</original>
    <variation>I</variation>
    <location>
        <position position="449"/>
    </location>
</feature>
<feature type="mutagenesis site" description="Reduces activity in Wnt signaling; when associated with I-449." evidence="8">
    <original>D</original>
    <variation>I</variation>
    <location>
        <position position="452"/>
    </location>
</feature>
<feature type="sequence conflict" description="In Ref. 2; AAA74049." evidence="21" ref="2">
    <original>HPNVA</original>
    <variation>Q</variation>
    <location>
        <begin position="121"/>
        <end position="125"/>
    </location>
</feature>
<feature type="sequence conflict" description="In Ref. 2; AAA74049." evidence="21" ref="2">
    <original>H</original>
    <variation>Q</variation>
    <location>
        <position position="121"/>
    </location>
</feature>
<feature type="sequence conflict" description="In Ref. 2; AAA74049." evidence="21" ref="2">
    <original>T</original>
    <variation>N</variation>
    <location>
        <position position="211"/>
    </location>
</feature>
<feature type="strand" evidence="25">
    <location>
        <begin position="4"/>
        <end position="9"/>
    </location>
</feature>
<feature type="strand" evidence="25">
    <location>
        <begin position="17"/>
        <end position="23"/>
    </location>
</feature>
<feature type="strand" evidence="25">
    <location>
        <begin position="25"/>
        <end position="27"/>
    </location>
</feature>
<feature type="helix" evidence="25">
    <location>
        <begin position="30"/>
        <end position="35"/>
    </location>
</feature>
<feature type="helix" evidence="25">
    <location>
        <begin position="42"/>
        <end position="44"/>
    </location>
</feature>
<feature type="strand" evidence="25">
    <location>
        <begin position="48"/>
        <end position="53"/>
    </location>
</feature>
<feature type="turn" evidence="25">
    <location>
        <begin position="54"/>
        <end position="56"/>
    </location>
</feature>
<feature type="strand" evidence="25">
    <location>
        <begin position="57"/>
        <end position="62"/>
    </location>
</feature>
<feature type="strand" evidence="25">
    <location>
        <begin position="76"/>
        <end position="80"/>
    </location>
</feature>
<feature type="strand" evidence="24">
    <location>
        <begin position="249"/>
        <end position="254"/>
    </location>
</feature>
<feature type="strand" evidence="23">
    <location>
        <begin position="258"/>
        <end position="260"/>
    </location>
</feature>
<feature type="strand" evidence="23">
    <location>
        <begin position="264"/>
        <end position="267"/>
    </location>
</feature>
<feature type="strand" evidence="23">
    <location>
        <begin position="272"/>
        <end position="274"/>
    </location>
</feature>
<feature type="strand" evidence="23">
    <location>
        <begin position="279"/>
        <end position="283"/>
    </location>
</feature>
<feature type="strand" evidence="23">
    <location>
        <begin position="286"/>
        <end position="288"/>
    </location>
</feature>
<feature type="helix" evidence="23">
    <location>
        <begin position="289"/>
        <end position="292"/>
    </location>
</feature>
<feature type="helix" evidence="23">
    <location>
        <begin position="297"/>
        <end position="299"/>
    </location>
</feature>
<feature type="strand" evidence="23">
    <location>
        <begin position="301"/>
        <end position="304"/>
    </location>
</feature>
<feature type="turn" evidence="23">
    <location>
        <begin position="310"/>
        <end position="312"/>
    </location>
</feature>
<feature type="helix" evidence="23">
    <location>
        <begin position="318"/>
        <end position="326"/>
    </location>
</feature>
<feature type="strand" evidence="23">
    <location>
        <begin position="327"/>
        <end position="329"/>
    </location>
</feature>
<feature type="strand" evidence="23">
    <location>
        <begin position="333"/>
        <end position="335"/>
    </location>
</feature>
<feature type="strand" evidence="22">
    <location>
        <begin position="411"/>
        <end position="413"/>
    </location>
</feature>
<feature type="helix" evidence="22">
    <location>
        <begin position="415"/>
        <end position="423"/>
    </location>
</feature>
<feature type="strand" evidence="22">
    <location>
        <begin position="427"/>
        <end position="429"/>
    </location>
</feature>
<feature type="strand" evidence="22">
    <location>
        <begin position="434"/>
        <end position="436"/>
    </location>
</feature>
<feature type="strand" evidence="22">
    <location>
        <begin position="439"/>
        <end position="443"/>
    </location>
</feature>
<feature type="helix" evidence="22">
    <location>
        <begin position="446"/>
        <end position="457"/>
    </location>
</feature>
<feature type="helix" evidence="22">
    <location>
        <begin position="464"/>
        <end position="476"/>
    </location>
</feature>
<feature type="turn" evidence="22">
    <location>
        <begin position="477"/>
        <end position="479"/>
    </location>
</feature>
<feature type="strand" evidence="22">
    <location>
        <begin position="483"/>
        <end position="486"/>
    </location>
</feature>
<feature type="strand" evidence="22">
    <location>
        <begin position="491"/>
        <end position="493"/>
    </location>
</feature>
<accession>P51141</accession>
<accession>Q3U2D3</accession>
<accession>Q60868</accession>
<sequence length="695" mass="75359">MAETKIIYHMDEEETPYLVKLPVAPERVTLADFKNVLSNRPVHAYKFFFKSMDQDFGVVKEEIFDDNAKLPCFNGRVVSWLVLAEGAHSDAGSQGTDSHTDLPPPLERTGGIGDSRPPSFHPNVASSRDGMDNETGTESMVSHRRERARRRNRDEAARTNGHPRGDRRRDLGLPPDSASTVLSSELESSSFIDSDEEDNTSRLSSSTEQSTSSRLVRKHKCRRRKQRLRQTDRASSFSSITDSTMSLNIITVTLNMERHHFLGISIVGQSNDRGDGGIYIGSIMKGGAVAADGRIEPGDMLLQVNDVNFENMSNDDAVRVLREIVSQTGPISLTVAKCWDPTPRSYFTIPRADPVRPIDPAAWLSHTAALTGALPRYGTSPCSSAITRTSSSSLTSSVPGAPQLEEAPLTVKSDMSAIVRVMQLPDSGLEIRDRMWLKITIANAVIGADVVDWLYTHVEGFKERREARKYASSMLKHGFLRHTVNKITFSEQCYYVFGDLCSNLASLNLNSGSSGASDQDTLAPLPHPSVPWPLGQGYPYQYPGPPPCFPPAYQDPGFSCGSGSAGSQQSEGSKSSGSTRSSHRTPGREERRATGAGGSGSESDHTVPSGSGSTGWWERPVSQLSRGSSPRSQASAVAPGLPPLHPLTKAYAVVGGPPGGPPVRELAAVPPELTGSRQSFQKAMGNPCEFFVDIM</sequence>
<reference key="1">
    <citation type="journal article" date="1994" name="Dev. Biol.">
        <title>Isolation and characterization of a mouse homolog of the Drosophila segment polarity gene dishevelled.</title>
        <authorList>
            <person name="Sussman D.J."/>
            <person name="Klingensmith J."/>
            <person name="Salinas P."/>
            <person name="Adams P.S."/>
            <person name="Nusse R."/>
            <person name="Perrimon N."/>
        </authorList>
    </citation>
    <scope>NUCLEOTIDE SEQUENCE [MRNA]</scope>
    <source>
        <strain>C57BL/6J</strain>
        <tissue>Brain</tissue>
    </source>
</reference>
<reference key="2">
    <citation type="journal article" date="1995" name="Genome Res.">
        <title>Organization and promoter analysis of the mouse dishevelled-1 gene.</title>
        <authorList>
            <person name="Lijam N."/>
            <person name="Sussman D.J."/>
        </authorList>
    </citation>
    <scope>NUCLEOTIDE SEQUENCE [GENOMIC DNA]</scope>
    <source>
        <strain>BALB/cJ</strain>
    </source>
</reference>
<reference key="3">
    <citation type="journal article" date="2005" name="Science">
        <title>The transcriptional landscape of the mammalian genome.</title>
        <authorList>
            <person name="Carninci P."/>
            <person name="Kasukawa T."/>
            <person name="Katayama S."/>
            <person name="Gough J."/>
            <person name="Frith M.C."/>
            <person name="Maeda N."/>
            <person name="Oyama R."/>
            <person name="Ravasi T."/>
            <person name="Lenhard B."/>
            <person name="Wells C."/>
            <person name="Kodzius R."/>
            <person name="Shimokawa K."/>
            <person name="Bajic V.B."/>
            <person name="Brenner S.E."/>
            <person name="Batalov S."/>
            <person name="Forrest A.R."/>
            <person name="Zavolan M."/>
            <person name="Davis M.J."/>
            <person name="Wilming L.G."/>
            <person name="Aidinis V."/>
            <person name="Allen J.E."/>
            <person name="Ambesi-Impiombato A."/>
            <person name="Apweiler R."/>
            <person name="Aturaliya R.N."/>
            <person name="Bailey T.L."/>
            <person name="Bansal M."/>
            <person name="Baxter L."/>
            <person name="Beisel K.W."/>
            <person name="Bersano T."/>
            <person name="Bono H."/>
            <person name="Chalk A.M."/>
            <person name="Chiu K.P."/>
            <person name="Choudhary V."/>
            <person name="Christoffels A."/>
            <person name="Clutterbuck D.R."/>
            <person name="Crowe M.L."/>
            <person name="Dalla E."/>
            <person name="Dalrymple B.P."/>
            <person name="de Bono B."/>
            <person name="Della Gatta G."/>
            <person name="di Bernardo D."/>
            <person name="Down T."/>
            <person name="Engstrom P."/>
            <person name="Fagiolini M."/>
            <person name="Faulkner G."/>
            <person name="Fletcher C.F."/>
            <person name="Fukushima T."/>
            <person name="Furuno M."/>
            <person name="Futaki S."/>
            <person name="Gariboldi M."/>
            <person name="Georgii-Hemming P."/>
            <person name="Gingeras T.R."/>
            <person name="Gojobori T."/>
            <person name="Green R.E."/>
            <person name="Gustincich S."/>
            <person name="Harbers M."/>
            <person name="Hayashi Y."/>
            <person name="Hensch T.K."/>
            <person name="Hirokawa N."/>
            <person name="Hill D."/>
            <person name="Huminiecki L."/>
            <person name="Iacono M."/>
            <person name="Ikeo K."/>
            <person name="Iwama A."/>
            <person name="Ishikawa T."/>
            <person name="Jakt M."/>
            <person name="Kanapin A."/>
            <person name="Katoh M."/>
            <person name="Kawasawa Y."/>
            <person name="Kelso J."/>
            <person name="Kitamura H."/>
            <person name="Kitano H."/>
            <person name="Kollias G."/>
            <person name="Krishnan S.P."/>
            <person name="Kruger A."/>
            <person name="Kummerfeld S.K."/>
            <person name="Kurochkin I.V."/>
            <person name="Lareau L.F."/>
            <person name="Lazarevic D."/>
            <person name="Lipovich L."/>
            <person name="Liu J."/>
            <person name="Liuni S."/>
            <person name="McWilliam S."/>
            <person name="Madan Babu M."/>
            <person name="Madera M."/>
            <person name="Marchionni L."/>
            <person name="Matsuda H."/>
            <person name="Matsuzawa S."/>
            <person name="Miki H."/>
            <person name="Mignone F."/>
            <person name="Miyake S."/>
            <person name="Morris K."/>
            <person name="Mottagui-Tabar S."/>
            <person name="Mulder N."/>
            <person name="Nakano N."/>
            <person name="Nakauchi H."/>
            <person name="Ng P."/>
            <person name="Nilsson R."/>
            <person name="Nishiguchi S."/>
            <person name="Nishikawa S."/>
            <person name="Nori F."/>
            <person name="Ohara O."/>
            <person name="Okazaki Y."/>
            <person name="Orlando V."/>
            <person name="Pang K.C."/>
            <person name="Pavan W.J."/>
            <person name="Pavesi G."/>
            <person name="Pesole G."/>
            <person name="Petrovsky N."/>
            <person name="Piazza S."/>
            <person name="Reed J."/>
            <person name="Reid J.F."/>
            <person name="Ring B.Z."/>
            <person name="Ringwald M."/>
            <person name="Rost B."/>
            <person name="Ruan Y."/>
            <person name="Salzberg S.L."/>
            <person name="Sandelin A."/>
            <person name="Schneider C."/>
            <person name="Schoenbach C."/>
            <person name="Sekiguchi K."/>
            <person name="Semple C.A."/>
            <person name="Seno S."/>
            <person name="Sessa L."/>
            <person name="Sheng Y."/>
            <person name="Shibata Y."/>
            <person name="Shimada H."/>
            <person name="Shimada K."/>
            <person name="Silva D."/>
            <person name="Sinclair B."/>
            <person name="Sperling S."/>
            <person name="Stupka E."/>
            <person name="Sugiura K."/>
            <person name="Sultana R."/>
            <person name="Takenaka Y."/>
            <person name="Taki K."/>
            <person name="Tammoja K."/>
            <person name="Tan S.L."/>
            <person name="Tang S."/>
            <person name="Taylor M.S."/>
            <person name="Tegner J."/>
            <person name="Teichmann S.A."/>
            <person name="Ueda H.R."/>
            <person name="van Nimwegen E."/>
            <person name="Verardo R."/>
            <person name="Wei C.L."/>
            <person name="Yagi K."/>
            <person name="Yamanishi H."/>
            <person name="Zabarovsky E."/>
            <person name="Zhu S."/>
            <person name="Zimmer A."/>
            <person name="Hide W."/>
            <person name="Bult C."/>
            <person name="Grimmond S.M."/>
            <person name="Teasdale R.D."/>
            <person name="Liu E.T."/>
            <person name="Brusic V."/>
            <person name="Quackenbush J."/>
            <person name="Wahlestedt C."/>
            <person name="Mattick J.S."/>
            <person name="Hume D.A."/>
            <person name="Kai C."/>
            <person name="Sasaki D."/>
            <person name="Tomaru Y."/>
            <person name="Fukuda S."/>
            <person name="Kanamori-Katayama M."/>
            <person name="Suzuki M."/>
            <person name="Aoki J."/>
            <person name="Arakawa T."/>
            <person name="Iida J."/>
            <person name="Imamura K."/>
            <person name="Itoh M."/>
            <person name="Kato T."/>
            <person name="Kawaji H."/>
            <person name="Kawagashira N."/>
            <person name="Kawashima T."/>
            <person name="Kojima M."/>
            <person name="Kondo S."/>
            <person name="Konno H."/>
            <person name="Nakano K."/>
            <person name="Ninomiya N."/>
            <person name="Nishio T."/>
            <person name="Okada M."/>
            <person name="Plessy C."/>
            <person name="Shibata K."/>
            <person name="Shiraki T."/>
            <person name="Suzuki S."/>
            <person name="Tagami M."/>
            <person name="Waki K."/>
            <person name="Watahiki A."/>
            <person name="Okamura-Oho Y."/>
            <person name="Suzuki H."/>
            <person name="Kawai J."/>
            <person name="Hayashizaki Y."/>
        </authorList>
    </citation>
    <scope>NUCLEOTIDE SEQUENCE [LARGE SCALE MRNA]</scope>
    <source>
        <strain>NOD</strain>
    </source>
</reference>
<reference key="4">
    <citation type="journal article" date="2009" name="PLoS Biol.">
        <title>Lineage-specific biology revealed by a finished genome assembly of the mouse.</title>
        <authorList>
            <person name="Church D.M."/>
            <person name="Goodstadt L."/>
            <person name="Hillier L.W."/>
            <person name="Zody M.C."/>
            <person name="Goldstein S."/>
            <person name="She X."/>
            <person name="Bult C.J."/>
            <person name="Agarwala R."/>
            <person name="Cherry J.L."/>
            <person name="DiCuccio M."/>
            <person name="Hlavina W."/>
            <person name="Kapustin Y."/>
            <person name="Meric P."/>
            <person name="Maglott D."/>
            <person name="Birtle Z."/>
            <person name="Marques A.C."/>
            <person name="Graves T."/>
            <person name="Zhou S."/>
            <person name="Teague B."/>
            <person name="Potamousis K."/>
            <person name="Churas C."/>
            <person name="Place M."/>
            <person name="Herschleb J."/>
            <person name="Runnheim R."/>
            <person name="Forrest D."/>
            <person name="Amos-Landgraf J."/>
            <person name="Schwartz D.C."/>
            <person name="Cheng Z."/>
            <person name="Lindblad-Toh K."/>
            <person name="Eichler E.E."/>
            <person name="Ponting C.P."/>
        </authorList>
    </citation>
    <scope>NUCLEOTIDE SEQUENCE [LARGE SCALE GENOMIC DNA]</scope>
    <source>
        <strain>C57BL/6J</strain>
    </source>
</reference>
<reference key="5">
    <citation type="submission" date="2005-07" db="EMBL/GenBank/DDBJ databases">
        <authorList>
            <person name="Mural R.J."/>
            <person name="Adams M.D."/>
            <person name="Myers E.W."/>
            <person name="Smith H.O."/>
            <person name="Venter J.C."/>
        </authorList>
    </citation>
    <scope>NUCLEOTIDE SEQUENCE [LARGE SCALE GENOMIC DNA]</scope>
</reference>
<reference key="6">
    <citation type="journal article" date="2004" name="Genome Res.">
        <title>The status, quality, and expansion of the NIH full-length cDNA project: the Mammalian Gene Collection (MGC).</title>
        <authorList>
            <consortium name="The MGC Project Team"/>
        </authorList>
    </citation>
    <scope>NUCLEOTIDE SEQUENCE [LARGE SCALE MRNA]</scope>
    <source>
        <tissue>Embryo</tissue>
    </source>
</reference>
<reference key="7">
    <citation type="journal article" date="1997" name="Cell">
        <title>Social interaction and sensorimotor gating abnormalities in mice lacking Dvl1.</title>
        <authorList>
            <person name="Lijam N."/>
            <person name="Paylor R."/>
            <person name="McDonald M.P."/>
            <person name="Crawley J.N."/>
            <person name="Deng C.-X."/>
            <person name="Herrup K."/>
            <person name="Stevens K.E."/>
            <person name="Maccaferri G."/>
            <person name="McBain C.J."/>
            <person name="Sussman D.J."/>
            <person name="Wynshaw-Boris A."/>
        </authorList>
    </citation>
    <scope>DISRUPTION PHENOTYPE</scope>
</reference>
<reference key="8">
    <citation type="journal article" date="2002" name="Neuron">
        <title>Regulation of AChR clustering by Dishevelled interacting with MuSK and PAK1.</title>
        <authorList>
            <person name="Luo Z.G."/>
            <person name="Wang Q."/>
            <person name="Zhou J.Z."/>
            <person name="Wang J."/>
            <person name="Luo Z."/>
            <person name="Liu M."/>
            <person name="He X."/>
            <person name="Wynshaw-Boris A."/>
            <person name="Xiong W.C."/>
            <person name="Lu B."/>
            <person name="Mei L."/>
        </authorList>
    </citation>
    <scope>FUNCTION IN NEUROMUSCULAR JUNCTION DEVELOPMENT</scope>
    <scope>INTERACTION WITH MUSK AND PAK1</scope>
</reference>
<reference key="9">
    <citation type="journal article" date="2003" name="Cancer Res.">
        <title>BP75, bromodomain-containing M(r) 75,000 protein, binds dishevelled-1 and enhances Wnt signaling by inactivating glycogen synthase kinase-3 beta.</title>
        <authorList>
            <person name="Kim S."/>
            <person name="Lee J."/>
            <person name="Park J."/>
            <person name="Chung J."/>
        </authorList>
    </citation>
    <scope>INTERACTION WITH BRD7</scope>
</reference>
<reference key="10">
    <citation type="journal article" date="2004" name="Cell">
        <title>Mammalian Ryk is a Wnt coreceptor required for stimulation of neurite outgrowth.</title>
        <authorList>
            <person name="Lu W."/>
            <person name="Yamamoto V."/>
            <person name="Ortega B."/>
            <person name="Baltimore D."/>
        </authorList>
    </citation>
    <scope>INTERACTION WITH RYK</scope>
</reference>
<reference key="11">
    <citation type="journal article" date="2004" name="Cell Res.">
        <title>Characterization of function of three domains in dishevelled-1: DEP domain is responsible for membrane translocation of dishevelled-1.</title>
        <authorList>
            <person name="Pan W.J."/>
            <person name="Pang S.Z."/>
            <person name="Huang T."/>
            <person name="Guo H.Y."/>
            <person name="Wu D."/>
            <person name="Li L."/>
        </authorList>
    </citation>
    <scope>FUNCTION</scope>
    <scope>SUBCELLULAR LOCATION</scope>
    <scope>INTERACTION WITH FZD7</scope>
    <scope>MUTAGENESIS OF LYS-438</scope>
    <scope>DOMAIN</scope>
</reference>
<reference key="12">
    <citation type="journal article" date="2004" name="J. Biol. Chem.">
        <title>Independent mutations in mouse Vangl2 that cause neural tube defects in looptail mice impair interaction with members of the Dishevelled family.</title>
        <authorList>
            <person name="Torban E."/>
            <person name="Wang H.-J."/>
            <person name="Groulx N."/>
            <person name="Gros P."/>
        </authorList>
    </citation>
    <scope>INTERACTION WITH VANGL1 AND VANGL2</scope>
</reference>
<reference key="13">
    <citation type="journal article" date="2006" name="Nat. Cell Biol.">
        <title>The thioredoxin-related redox-regulating protein nucleoredoxin inhibits Wnt-beta-catenin signalling through dishevelled.</title>
        <authorList>
            <person name="Funato Y."/>
            <person name="Michiue T."/>
            <person name="Asashima M."/>
            <person name="Miki H."/>
        </authorList>
    </citation>
    <scope>INTERACTION WITH NXN</scope>
</reference>
<reference key="14">
    <citation type="journal article" date="2010" name="Mol. Cell">
        <title>Loss of the tumor suppressor CYLD enhances Wnt/beta-catenin signaling through K63-linked ubiquitination of Dvl.</title>
        <authorList>
            <person name="Tauriello D.V."/>
            <person name="Haegebarth A."/>
            <person name="Kuper I."/>
            <person name="Edelmann M.J."/>
            <person name="Henraat M."/>
            <person name="Canninga-van Dijk M.R."/>
            <person name="Kessler B.M."/>
            <person name="Clevers H."/>
            <person name="Maurice M.M."/>
        </authorList>
    </citation>
    <scope>UBIQUITINATION</scope>
    <scope>DEUBIQUITINATION</scope>
    <scope>IDENTIFICATION BY MASS SPECTROMETRY</scope>
    <scope>INTERACTION WITH CYLD</scope>
</reference>
<reference key="15">
    <citation type="journal article" date="2016" name="Nat. Cell Biol.">
        <title>The polycystin complex mediates Wnt/Ca(2+) signalling.</title>
        <authorList>
            <person name="Kim S."/>
            <person name="Nie H."/>
            <person name="Nesin V."/>
            <person name="Tran U."/>
            <person name="Outeda P."/>
            <person name="Bai C.X."/>
            <person name="Keeling J."/>
            <person name="Maskey D."/>
            <person name="Watnick T."/>
            <person name="Wessely O."/>
            <person name="Tsiokas L."/>
        </authorList>
    </citation>
    <scope>INTERACTION WITH PKD1</scope>
</reference>
<reference key="16">
    <citation type="journal article" date="2000" name="Nat. Struct. Biol.">
        <title>Structural basis of the recognition of the dishevelled DEP domain in the Wnt signaling pathway.</title>
        <authorList>
            <person name="Wong H.C."/>
            <person name="Mao J."/>
            <person name="Nguyen J.T."/>
            <person name="Srinivas S."/>
            <person name="Zhang W."/>
            <person name="Liu B."/>
            <person name="Li L."/>
            <person name="Wu D."/>
            <person name="Zheng J."/>
        </authorList>
    </citation>
    <scope>STRUCTURE BY NMR OF 395-495</scope>
    <scope>FUNCTION</scope>
    <scope>MUTAGENESIS OF LYS-438; ASP-449 AND ASP-452</scope>
</reference>
<reference key="17">
    <citation type="journal article" date="2003" name="Mol. Cell">
        <title>Direct binding of the PDZ domain of Dishevelled to a conserved internal sequence in the C-terminal region of Frizzled.</title>
        <authorList>
            <person name="Wong H.C."/>
            <person name="Bourdelas A."/>
            <person name="Krauss A."/>
            <person name="Lee H.J."/>
            <person name="Shao Y."/>
            <person name="Wu D."/>
            <person name="Mlodzik M."/>
            <person name="Shi D.L."/>
            <person name="Zheng J."/>
        </authorList>
    </citation>
    <scope>STRUCTURE BY NMR OF 251-345</scope>
    <scope>INTERACTION WITH DACT1 AND FZD7</scope>
</reference>
<reference key="18">
    <citation type="journal article" date="2009" name="Angew. Chem. Int. Ed.">
        <title>Sulindac inhibits canonical Wnt signaling by blocking the PDZ domain of the protein Dishevelled.</title>
        <authorList>
            <person name="Lee H.J."/>
            <person name="Wang N.X."/>
            <person name="Shi D.L."/>
            <person name="Zheng J.J."/>
        </authorList>
    </citation>
    <scope>STRUCTURE BY NMR OF 248-337 IN COMPLEX WITH SULINDAC</scope>
    <scope>INTERACTION WITH DACT1</scope>
    <scope>FUNCTION</scope>
</reference>
<reference key="19">
    <citation type="journal article" date="2011" name="J. Biol. Chem.">
        <title>Molecular basis of Wnt activation via the DIX-domain protein Ccd1.</title>
        <authorList>
            <person name="Liu Y.T."/>
            <person name="Dan Q.J."/>
            <person name="Wang J."/>
            <person name="Feng Y."/>
            <person name="Chen L."/>
            <person name="Liang J."/>
            <person name="Li Q."/>
            <person name="Lin S.C."/>
            <person name="Wang Z.X."/>
            <person name="Wu J.W."/>
        </authorList>
    </citation>
    <scope>X-RAY CRYSTALLOGRAPHY (2.87 ANGSTROMS) OF 4-104</scope>
    <scope>MUTAGENESIS OF TYR-17</scope>
    <scope>DOMAIN</scope>
    <scope>SUBUNIT</scope>
</reference>
<proteinExistence type="evidence at protein level"/>
<comment type="function">
    <text evidence="8 9 12 16">Participates in Wnt signaling by binding to the cytoplasmic C-terminus of frizzled family members and transducing the Wnt signal to down-stream effectors. Plays a role both in canonical and non-canonical Wnt signaling. Plays a role in the signal transduction pathways mediated by multiple Wnt genes. Required for LEF1 activation upon WNT1 and WNT3A signaling. DVL1 and PAK1 form a ternary complex with MUSK which is important for MUSK-dependent regulation of AChR clustering during the formation of the neuromuscular junction (NMJ).</text>
</comment>
<comment type="subunit">
    <text evidence="2 3 9 10 11 12 13 14 15 16 17 18 19">Interacts with CXXC4 (By similarity). Interacts (via PDZ domain) with TMEM88 (By similarity). Interacts with BRD7 and INVS. Interacts (via PDZ domain) with VANGL1 and VANGL2 (via C-terminus). Interacts (via PDZ domain) with NXN. Interacts with ARRB1; the interaction is enhanced by phosphorylation of DVL1 (By similarity). Interacts with CYLD. Interacts (via PDZ domain) with RYK. Self-associates (via DIX domain) and forms higher homooligomers. Interacts (via PDZ domain) with DACT1 and FZD7, where DACT1 and FZD7 compete for the same binding site. Interacts (via DEP domain) with MUSK; the interaction is direct and mediates the formation a DVL1, MUSK and PAK1 ternary complex involved in AChR clustering. Interacts with DCDC2. Interacts with FOXK2 (By similarity). Interacts with PKD1 (via extracellular domain) (PubMed:27214281). Interacts (via PDZ domain) with CCDC88C/DAPLE; competes with CCDC88C for binding to frizzled receptor FZD7 and dissociates from CCDC88C following initiation of non-canonical Wnt signaling when CCDC88C displaces DVL1 from ligand-activated FZD7 (By similarity).</text>
</comment>
<comment type="interaction">
    <interactant intactId="EBI-1538407">
        <id>P51141</id>
    </interactant>
    <interactant intactId="EBI-3870250">
        <id>Q8R4A3</id>
        <label>Dact1</label>
    </interactant>
    <organismsDiffer>false</organismsDiffer>
    <experiments>4</experiments>
</comment>
<comment type="interaction">
    <interactant intactId="EBI-1538407">
        <id>P51141</id>
    </interactant>
    <interactant intactId="EBI-1216575">
        <id>Q08639</id>
        <label>Tfdp1</label>
    </interactant>
    <organismsDiffer>false</organismsDiffer>
    <experiments>3</experiments>
</comment>
<comment type="interaction">
    <interactant intactId="EBI-1538407">
        <id>P51141</id>
    </interactant>
    <interactant intactId="EBI-6136970">
        <id>Q9D0N8</id>
        <label>Tmem88</label>
    </interactant>
    <organismsDiffer>false</organismsDiffer>
    <experiments>2</experiments>
</comment>
<comment type="interaction">
    <interactant intactId="EBI-1538407">
        <id>P51141</id>
    </interactant>
    <interactant intactId="EBI-1750708">
        <id>Q80Z96</id>
        <label>Vangl1</label>
    </interactant>
    <organismsDiffer>false</organismsDiffer>
    <experiments>2</experiments>
</comment>
<comment type="interaction">
    <interactant intactId="EBI-1538407">
        <id>P51141</id>
    </interactant>
    <interactant intactId="EBI-1750744">
        <id>Q91ZD4</id>
        <label>Vangl2</label>
    </interactant>
    <organismsDiffer>false</organismsDiffer>
    <experiments>2</experiments>
</comment>
<comment type="interaction">
    <interactant intactId="EBI-1538407">
        <id>P51141</id>
    </interactant>
    <interactant intactId="EBI-3870271">
        <id>Q8AVJ9</id>
        <label>fzd7-b</label>
    </interactant>
    <organismsDiffer>true</organismsDiffer>
    <experiments>3</experiments>
</comment>
<comment type="subcellular location">
    <subcellularLocation>
        <location evidence="12">Cell membrane</location>
        <topology evidence="12">Peripheral membrane protein</topology>
        <orientation evidence="12">Cytoplasmic side</orientation>
    </subcellularLocation>
    <subcellularLocation>
        <location evidence="12">Cytoplasm</location>
        <location evidence="12">Cytosol</location>
    </subcellularLocation>
    <subcellularLocation>
        <location evidence="12">Cytoplasmic vesicle</location>
    </subcellularLocation>
    <text>Localizes at the cell membrane upon interaction with frizzled family members.</text>
</comment>
<comment type="tissue specificity">
    <text>High levels are seen in the brain, testis and kidney, lower levels in the ovary, breast, muscle, liver and small intestine, and very low levels are seen in the spleen and thymus. A moderate level expression is seen in the heart.</text>
</comment>
<comment type="developmental stage">
    <text>Is expressed throughout the embryonic central nervous system from presomite stages and in neuron-rich areas of the brain throughout postnatal development, as well as in many other tissues.</text>
</comment>
<comment type="domain">
    <text>The DIX domain promotes homooligomerization.</text>
</comment>
<comment type="domain">
    <text>The DEP domain mediates interaction with the cell membrane.</text>
</comment>
<comment type="PTM">
    <text evidence="1 17">Ubiquitinated; undergoes both 'Lys-48'-linked ubiquitination, leading to its subsequent degradation by the ubiquitin-proteasome pathway, and 'Lys-63'-linked ubiquitination. The interaction with INVS is required for ubiquitination (By similarity). Deubiquitinated by CYLD, which acts on 'Lys-63'-linked ubiquitin chains.</text>
</comment>
<comment type="disruption phenotype">
    <text evidence="20">Mice display abnormalities in social behavior and sensorimotor gating.</text>
</comment>
<comment type="similarity">
    <text evidence="21">Belongs to the DSH family.</text>
</comment>
<gene>
    <name type="primary">Dvl1</name>
    <name type="synonym">Dvl</name>
</gene>
<organism>
    <name type="scientific">Mus musculus</name>
    <name type="common">Mouse</name>
    <dbReference type="NCBI Taxonomy" id="10090"/>
    <lineage>
        <taxon>Eukaryota</taxon>
        <taxon>Metazoa</taxon>
        <taxon>Chordata</taxon>
        <taxon>Craniata</taxon>
        <taxon>Vertebrata</taxon>
        <taxon>Euteleostomi</taxon>
        <taxon>Mammalia</taxon>
        <taxon>Eutheria</taxon>
        <taxon>Euarchontoglires</taxon>
        <taxon>Glires</taxon>
        <taxon>Rodentia</taxon>
        <taxon>Myomorpha</taxon>
        <taxon>Muroidea</taxon>
        <taxon>Muridae</taxon>
        <taxon>Murinae</taxon>
        <taxon>Mus</taxon>
        <taxon>Mus</taxon>
    </lineage>
</organism>
<dbReference type="EMBL" id="U10115">
    <property type="protein sequence ID" value="AAA82175.1"/>
    <property type="molecule type" value="mRNA"/>
</dbReference>
<dbReference type="EMBL" id="U28138">
    <property type="protein sequence ID" value="AAA74049.1"/>
    <property type="molecule type" value="Genomic_DNA"/>
</dbReference>
<dbReference type="EMBL" id="AK155349">
    <property type="protein sequence ID" value="BAE33208.1"/>
    <property type="molecule type" value="mRNA"/>
</dbReference>
<dbReference type="EMBL" id="AL670236">
    <property type="status" value="NOT_ANNOTATED_CDS"/>
    <property type="molecule type" value="Genomic_DNA"/>
</dbReference>
<dbReference type="EMBL" id="CH466594">
    <property type="protein sequence ID" value="EDL15045.1"/>
    <property type="molecule type" value="Genomic_DNA"/>
</dbReference>
<dbReference type="EMBL" id="BC138848">
    <property type="protein sequence ID" value="AAI38849.1"/>
    <property type="molecule type" value="mRNA"/>
</dbReference>
<dbReference type="EMBL" id="BC138849">
    <property type="protein sequence ID" value="AAI38850.1"/>
    <property type="molecule type" value="mRNA"/>
</dbReference>
<dbReference type="CCDS" id="CCDS19045.1"/>
<dbReference type="RefSeq" id="NP_001289271.1">
    <property type="nucleotide sequence ID" value="NM_001302342.1"/>
</dbReference>
<dbReference type="RefSeq" id="NP_034221.3">
    <property type="nucleotide sequence ID" value="NM_010091.4"/>
</dbReference>
<dbReference type="PDB" id="1FSH">
    <property type="method" value="NMR"/>
    <property type="chains" value="A=395-499"/>
</dbReference>
<dbReference type="PDB" id="1MC7">
    <property type="method" value="NMR"/>
    <property type="chains" value="A=251-345"/>
</dbReference>
<dbReference type="PDB" id="2KAW">
    <property type="method" value="NMR"/>
    <property type="chains" value="A=248-337"/>
</dbReference>
<dbReference type="PDB" id="2MX6">
    <property type="method" value="NMR"/>
    <property type="chains" value="A=248-337"/>
</dbReference>
<dbReference type="PDB" id="3PZ8">
    <property type="method" value="X-ray"/>
    <property type="resolution" value="2.87 A"/>
    <property type="chains" value="A/B/C/D/E/F/G/H=3-104"/>
</dbReference>
<dbReference type="PDBsum" id="1FSH"/>
<dbReference type="PDBsum" id="1MC7"/>
<dbReference type="PDBsum" id="2KAW"/>
<dbReference type="PDBsum" id="2MX6"/>
<dbReference type="PDBsum" id="3PZ8"/>
<dbReference type="SMR" id="P51141"/>
<dbReference type="BioGRID" id="199342">
    <property type="interactions" value="33"/>
</dbReference>
<dbReference type="CORUM" id="P51141"/>
<dbReference type="DIP" id="DIP-38263N"/>
<dbReference type="FunCoup" id="P51141">
    <property type="interactions" value="1126"/>
</dbReference>
<dbReference type="IntAct" id="P51141">
    <property type="interactions" value="21"/>
</dbReference>
<dbReference type="MINT" id="P51141"/>
<dbReference type="STRING" id="10090.ENSMUSP00000030948"/>
<dbReference type="BindingDB" id="P51141"/>
<dbReference type="ChEMBL" id="CHEMBL3813590"/>
<dbReference type="GlyGen" id="P51141">
    <property type="glycosylation" value="3 sites, 2 N-linked glycans (2 sites), 1 O-linked glycan (1 site)"/>
</dbReference>
<dbReference type="iPTMnet" id="P51141"/>
<dbReference type="PhosphoSitePlus" id="P51141"/>
<dbReference type="SwissPalm" id="P51141"/>
<dbReference type="PaxDb" id="10090-ENSMUSP00000030948"/>
<dbReference type="PeptideAtlas" id="P51141"/>
<dbReference type="ProteomicsDB" id="277417"/>
<dbReference type="Pumba" id="P51141"/>
<dbReference type="Antibodypedia" id="26291">
    <property type="antibodies" value="257 antibodies from 34 providers"/>
</dbReference>
<dbReference type="DNASU" id="13542"/>
<dbReference type="Ensembl" id="ENSMUST00000030948.16">
    <property type="protein sequence ID" value="ENSMUSP00000030948.10"/>
    <property type="gene ID" value="ENSMUSG00000029071.17"/>
</dbReference>
<dbReference type="Ensembl" id="ENSMUST00000168552.2">
    <property type="protein sequence ID" value="ENSMUSP00000133137.2"/>
    <property type="gene ID" value="ENSMUSG00000029071.17"/>
</dbReference>
<dbReference type="GeneID" id="13542"/>
<dbReference type="KEGG" id="mmu:13542"/>
<dbReference type="UCSC" id="uc008wfc.2">
    <property type="organism name" value="mouse"/>
</dbReference>
<dbReference type="AGR" id="MGI:94941"/>
<dbReference type="CTD" id="1855"/>
<dbReference type="MGI" id="MGI:94941">
    <property type="gene designation" value="Dvl1"/>
</dbReference>
<dbReference type="VEuPathDB" id="HostDB:ENSMUSG00000029071"/>
<dbReference type="eggNOG" id="KOG3571">
    <property type="taxonomic scope" value="Eukaryota"/>
</dbReference>
<dbReference type="GeneTree" id="ENSGT00950000182903"/>
<dbReference type="HOGENOM" id="CLU_012601_1_0_1"/>
<dbReference type="InParanoid" id="P51141"/>
<dbReference type="OMA" id="GTFPRYG"/>
<dbReference type="OrthoDB" id="10031689at2759"/>
<dbReference type="PhylomeDB" id="P51141"/>
<dbReference type="TreeFam" id="TF318198"/>
<dbReference type="Reactome" id="R-MMU-201688">
    <property type="pathway name" value="WNT mediated activation of DVL"/>
</dbReference>
<dbReference type="Reactome" id="R-MMU-4086400">
    <property type="pathway name" value="PCP/CE pathway"/>
</dbReference>
<dbReference type="Reactome" id="R-MMU-4641258">
    <property type="pathway name" value="Degradation of DVL"/>
</dbReference>
<dbReference type="Reactome" id="R-MMU-4641262">
    <property type="pathway name" value="Disassembly of the destruction complex and recruitment of AXIN to the membrane"/>
</dbReference>
<dbReference type="Reactome" id="R-MMU-5663220">
    <property type="pathway name" value="RHO GTPases Activate Formins"/>
</dbReference>
<dbReference type="BioGRID-ORCS" id="13542">
    <property type="hits" value="2 hits in 78 CRISPR screens"/>
</dbReference>
<dbReference type="ChiTaRS" id="Dvl1">
    <property type="organism name" value="mouse"/>
</dbReference>
<dbReference type="EvolutionaryTrace" id="P51141"/>
<dbReference type="PRO" id="PR:P51141"/>
<dbReference type="Proteomes" id="UP000000589">
    <property type="component" value="Chromosome 4"/>
</dbReference>
<dbReference type="RNAct" id="P51141">
    <property type="molecule type" value="protein"/>
</dbReference>
<dbReference type="Bgee" id="ENSMUSG00000029071">
    <property type="expression patterns" value="Expressed in metanephric proximal tubule and 280 other cell types or tissues"/>
</dbReference>
<dbReference type="GO" id="GO:0030424">
    <property type="term" value="C:axon"/>
    <property type="evidence" value="ECO:0000314"/>
    <property type="project" value="MGI"/>
</dbReference>
<dbReference type="GO" id="GO:0030136">
    <property type="term" value="C:clathrin-coated vesicle"/>
    <property type="evidence" value="ECO:0000314"/>
    <property type="project" value="MGI"/>
</dbReference>
<dbReference type="GO" id="GO:0031410">
    <property type="term" value="C:cytoplasmic vesicle"/>
    <property type="evidence" value="ECO:0000314"/>
    <property type="project" value="MGI"/>
</dbReference>
<dbReference type="GO" id="GO:0005829">
    <property type="term" value="C:cytosol"/>
    <property type="evidence" value="ECO:0000314"/>
    <property type="project" value="MGI"/>
</dbReference>
<dbReference type="GO" id="GO:0043197">
    <property type="term" value="C:dendritic spine"/>
    <property type="evidence" value="ECO:0007669"/>
    <property type="project" value="Ensembl"/>
</dbReference>
<dbReference type="GO" id="GO:0098978">
    <property type="term" value="C:glutamatergic synapse"/>
    <property type="evidence" value="ECO:0000314"/>
    <property type="project" value="SynGO"/>
</dbReference>
<dbReference type="GO" id="GO:0030426">
    <property type="term" value="C:growth cone"/>
    <property type="evidence" value="ECO:0007669"/>
    <property type="project" value="Ensembl"/>
</dbReference>
<dbReference type="GO" id="GO:0016328">
    <property type="term" value="C:lateral plasma membrane"/>
    <property type="evidence" value="ECO:0007669"/>
    <property type="project" value="Ensembl"/>
</dbReference>
<dbReference type="GO" id="GO:0005874">
    <property type="term" value="C:microtubule"/>
    <property type="evidence" value="ECO:0007669"/>
    <property type="project" value="Ensembl"/>
</dbReference>
<dbReference type="GO" id="GO:0015630">
    <property type="term" value="C:microtubule cytoskeleton"/>
    <property type="evidence" value="ECO:0000314"/>
    <property type="project" value="MGI"/>
</dbReference>
<dbReference type="GO" id="GO:0043025">
    <property type="term" value="C:neuronal cell body"/>
    <property type="evidence" value="ECO:0007669"/>
    <property type="project" value="Ensembl"/>
</dbReference>
<dbReference type="GO" id="GO:0098992">
    <property type="term" value="C:neuronal dense core vesicle"/>
    <property type="evidence" value="ECO:0000314"/>
    <property type="project" value="SynGO"/>
</dbReference>
<dbReference type="GO" id="GO:0005886">
    <property type="term" value="C:plasma membrane"/>
    <property type="evidence" value="ECO:0000314"/>
    <property type="project" value="UniProtKB"/>
</dbReference>
<dbReference type="GO" id="GO:0014069">
    <property type="term" value="C:postsynaptic density"/>
    <property type="evidence" value="ECO:0000314"/>
    <property type="project" value="SynGO"/>
</dbReference>
<dbReference type="GO" id="GO:0098793">
    <property type="term" value="C:presynapse"/>
    <property type="evidence" value="ECO:0000314"/>
    <property type="project" value="SynGO"/>
</dbReference>
<dbReference type="GO" id="GO:0098685">
    <property type="term" value="C:Schaffer collateral - CA1 synapse"/>
    <property type="evidence" value="ECO:0000314"/>
    <property type="project" value="SynGO"/>
</dbReference>
<dbReference type="GO" id="GO:0045202">
    <property type="term" value="C:synapse"/>
    <property type="evidence" value="ECO:0000314"/>
    <property type="project" value="MGI"/>
</dbReference>
<dbReference type="GO" id="GO:1990909">
    <property type="term" value="C:Wnt signalosome"/>
    <property type="evidence" value="ECO:0000314"/>
    <property type="project" value="ParkinsonsUK-UCL"/>
</dbReference>
<dbReference type="GO" id="GO:0008013">
    <property type="term" value="F:beta-catenin binding"/>
    <property type="evidence" value="ECO:0000314"/>
    <property type="project" value="ParkinsonsUK-UCL"/>
</dbReference>
<dbReference type="GO" id="GO:0005109">
    <property type="term" value="F:frizzled binding"/>
    <property type="evidence" value="ECO:0007669"/>
    <property type="project" value="Ensembl"/>
</dbReference>
<dbReference type="GO" id="GO:0042802">
    <property type="term" value="F:identical protein binding"/>
    <property type="evidence" value="ECO:0007669"/>
    <property type="project" value="Ensembl"/>
</dbReference>
<dbReference type="GO" id="GO:0019901">
    <property type="term" value="F:protein kinase binding"/>
    <property type="evidence" value="ECO:0000353"/>
    <property type="project" value="ParkinsonsUK-UCL"/>
</dbReference>
<dbReference type="GO" id="GO:0031267">
    <property type="term" value="F:small GTPase binding"/>
    <property type="evidence" value="ECO:0007669"/>
    <property type="project" value="Ensembl"/>
</dbReference>
<dbReference type="GO" id="GO:0048675">
    <property type="term" value="P:axon extension"/>
    <property type="evidence" value="ECO:0000314"/>
    <property type="project" value="MGI"/>
</dbReference>
<dbReference type="GO" id="GO:0007411">
    <property type="term" value="P:axon guidance"/>
    <property type="evidence" value="ECO:0000314"/>
    <property type="project" value="MGI"/>
</dbReference>
<dbReference type="GO" id="GO:0007409">
    <property type="term" value="P:axonogenesis"/>
    <property type="evidence" value="ECO:0000314"/>
    <property type="project" value="MGI"/>
</dbReference>
<dbReference type="GO" id="GO:0060070">
    <property type="term" value="P:canonical Wnt signaling pathway"/>
    <property type="evidence" value="ECO:0000314"/>
    <property type="project" value="ParkinsonsUK-UCL"/>
</dbReference>
<dbReference type="GO" id="GO:0090103">
    <property type="term" value="P:cochlea morphogenesis"/>
    <property type="evidence" value="ECO:0000316"/>
    <property type="project" value="MGI"/>
</dbReference>
<dbReference type="GO" id="GO:0048668">
    <property type="term" value="P:collateral sprouting"/>
    <property type="evidence" value="ECO:0000314"/>
    <property type="project" value="MGI"/>
</dbReference>
<dbReference type="GO" id="GO:0022007">
    <property type="term" value="P:convergent extension involved in neural plate elongation"/>
    <property type="evidence" value="ECO:0000316"/>
    <property type="project" value="MGI"/>
</dbReference>
<dbReference type="GO" id="GO:0060029">
    <property type="term" value="P:convergent extension involved in organogenesis"/>
    <property type="evidence" value="ECO:0000315"/>
    <property type="project" value="MGI"/>
</dbReference>
<dbReference type="GO" id="GO:0031122">
    <property type="term" value="P:cytoplasmic microtubule organization"/>
    <property type="evidence" value="ECO:0000314"/>
    <property type="project" value="MGI"/>
</dbReference>
<dbReference type="GO" id="GO:0048813">
    <property type="term" value="P:dendrite morphogenesis"/>
    <property type="evidence" value="ECO:0000315"/>
    <property type="project" value="MGI"/>
</dbReference>
<dbReference type="GO" id="GO:0060997">
    <property type="term" value="P:dendritic spine morphogenesis"/>
    <property type="evidence" value="ECO:0007669"/>
    <property type="project" value="Ensembl"/>
</dbReference>
<dbReference type="GO" id="GO:0001947">
    <property type="term" value="P:heart looping"/>
    <property type="evidence" value="ECO:0000316"/>
    <property type="project" value="BHF-UCL"/>
</dbReference>
<dbReference type="GO" id="GO:0035556">
    <property type="term" value="P:intracellular signal transduction"/>
    <property type="evidence" value="ECO:0007669"/>
    <property type="project" value="InterPro"/>
</dbReference>
<dbReference type="GO" id="GO:0021915">
    <property type="term" value="P:neural tube development"/>
    <property type="evidence" value="ECO:0007669"/>
    <property type="project" value="Ensembl"/>
</dbReference>
<dbReference type="GO" id="GO:0007528">
    <property type="term" value="P:neuromuscular junction development"/>
    <property type="evidence" value="ECO:0000316"/>
    <property type="project" value="MGI"/>
</dbReference>
<dbReference type="GO" id="GO:0007269">
    <property type="term" value="P:neurotransmitter secretion"/>
    <property type="evidence" value="ECO:0000316"/>
    <property type="project" value="MGI"/>
</dbReference>
<dbReference type="GO" id="GO:0003151">
    <property type="term" value="P:outflow tract morphogenesis"/>
    <property type="evidence" value="ECO:0000316"/>
    <property type="project" value="BHF-UCL"/>
</dbReference>
<dbReference type="GO" id="GO:2000463">
    <property type="term" value="P:positive regulation of excitatory postsynaptic potential"/>
    <property type="evidence" value="ECO:0007669"/>
    <property type="project" value="Ensembl"/>
</dbReference>
<dbReference type="GO" id="GO:0150012">
    <property type="term" value="P:positive regulation of neuron projection arborization"/>
    <property type="evidence" value="ECO:0007669"/>
    <property type="project" value="Ensembl"/>
</dbReference>
<dbReference type="GO" id="GO:0010976">
    <property type="term" value="P:positive regulation of neuron projection development"/>
    <property type="evidence" value="ECO:0000315"/>
    <property type="project" value="MGI"/>
</dbReference>
<dbReference type="GO" id="GO:0032436">
    <property type="term" value="P:positive regulation of proteasomal ubiquitin-dependent protein catabolic process"/>
    <property type="evidence" value="ECO:0007669"/>
    <property type="project" value="Ensembl"/>
</dbReference>
<dbReference type="GO" id="GO:0045944">
    <property type="term" value="P:positive regulation of transcription by RNA polymerase II"/>
    <property type="evidence" value="ECO:0007669"/>
    <property type="project" value="Ensembl"/>
</dbReference>
<dbReference type="GO" id="GO:0099173">
    <property type="term" value="P:postsynapse organization"/>
    <property type="evidence" value="ECO:0000314"/>
    <property type="project" value="SynGO"/>
</dbReference>
<dbReference type="GO" id="GO:0060134">
    <property type="term" value="P:prepulse inhibition"/>
    <property type="evidence" value="ECO:0000315"/>
    <property type="project" value="MGI"/>
</dbReference>
<dbReference type="GO" id="GO:0099054">
    <property type="term" value="P:presynapse assembly"/>
    <property type="evidence" value="ECO:0000314"/>
    <property type="project" value="SynGO"/>
</dbReference>
<dbReference type="GO" id="GO:0035372">
    <property type="term" value="P:protein localization to microtubule"/>
    <property type="evidence" value="ECO:0000316"/>
    <property type="project" value="MGI"/>
</dbReference>
<dbReference type="GO" id="GO:0034504">
    <property type="term" value="P:protein localization to nucleus"/>
    <property type="evidence" value="ECO:0007669"/>
    <property type="project" value="Ensembl"/>
</dbReference>
<dbReference type="GO" id="GO:0050821">
    <property type="term" value="P:protein stabilization"/>
    <property type="evidence" value="ECO:0000316"/>
    <property type="project" value="ParkinsonsUK-UCL"/>
</dbReference>
<dbReference type="GO" id="GO:0043113">
    <property type="term" value="P:receptor clustering"/>
    <property type="evidence" value="ECO:0000316"/>
    <property type="project" value="MGI"/>
</dbReference>
<dbReference type="GO" id="GO:0099175">
    <property type="term" value="P:regulation of postsynapse organization"/>
    <property type="evidence" value="ECO:0000314"/>
    <property type="project" value="SynGO"/>
</dbReference>
<dbReference type="GO" id="GO:0032880">
    <property type="term" value="P:regulation of protein localization"/>
    <property type="evidence" value="ECO:0007669"/>
    <property type="project" value="Ensembl"/>
</dbReference>
<dbReference type="GO" id="GO:2000300">
    <property type="term" value="P:regulation of synaptic vesicle exocytosis"/>
    <property type="evidence" value="ECO:0000314"/>
    <property type="project" value="SynGO"/>
</dbReference>
<dbReference type="GO" id="GO:0071340">
    <property type="term" value="P:skeletal muscle acetylcholine-gated channel clustering"/>
    <property type="evidence" value="ECO:0000315"/>
    <property type="project" value="MGI"/>
</dbReference>
<dbReference type="GO" id="GO:0035176">
    <property type="term" value="P:social behavior"/>
    <property type="evidence" value="ECO:0000315"/>
    <property type="project" value="MGI"/>
</dbReference>
<dbReference type="GO" id="GO:0050808">
    <property type="term" value="P:synapse organization"/>
    <property type="evidence" value="ECO:0000315"/>
    <property type="project" value="MGI"/>
</dbReference>
<dbReference type="GO" id="GO:0016079">
    <property type="term" value="P:synaptic vesicle exocytosis"/>
    <property type="evidence" value="ECO:0000315"/>
    <property type="project" value="MGI"/>
</dbReference>
<dbReference type="GO" id="GO:0060071">
    <property type="term" value="P:Wnt signaling pathway, planar cell polarity pathway"/>
    <property type="evidence" value="ECO:0000314"/>
    <property type="project" value="MGI"/>
</dbReference>
<dbReference type="CDD" id="cd04438">
    <property type="entry name" value="DEP_dishevelled"/>
    <property type="match status" value="1"/>
</dbReference>
<dbReference type="CDD" id="cd06717">
    <property type="entry name" value="PDZ_Dishevelled-like"/>
    <property type="match status" value="1"/>
</dbReference>
<dbReference type="FunFam" id="2.40.240.130:FF:000001">
    <property type="entry name" value="Segment polarity protein dishevelled homolog DVL-1"/>
    <property type="match status" value="1"/>
</dbReference>
<dbReference type="FunFam" id="2.30.42.10:FF:000014">
    <property type="entry name" value="Segment polarity protein dishevelled homolog DVL-3"/>
    <property type="match status" value="1"/>
</dbReference>
<dbReference type="FunFam" id="1.10.10.10:FF:000040">
    <property type="entry name" value="segment polarity protein dishevelled homolog DVL-3"/>
    <property type="match status" value="1"/>
</dbReference>
<dbReference type="Gene3D" id="2.30.42.10">
    <property type="match status" value="1"/>
</dbReference>
<dbReference type="Gene3D" id="2.40.240.130">
    <property type="match status" value="1"/>
</dbReference>
<dbReference type="Gene3D" id="1.10.10.10">
    <property type="entry name" value="Winged helix-like DNA-binding domain superfamily/Winged helix DNA-binding domain"/>
    <property type="match status" value="1"/>
</dbReference>
<dbReference type="InterPro" id="IPR000591">
    <property type="entry name" value="DEP_dom"/>
</dbReference>
<dbReference type="InterPro" id="IPR024580">
    <property type="entry name" value="Dishevelled_C-dom"/>
</dbReference>
<dbReference type="InterPro" id="IPR008339">
    <property type="entry name" value="Dishevelled_fam"/>
</dbReference>
<dbReference type="InterPro" id="IPR003351">
    <property type="entry name" value="Dishevelled_protein_dom"/>
</dbReference>
<dbReference type="InterPro" id="IPR001158">
    <property type="entry name" value="DIX"/>
</dbReference>
<dbReference type="InterPro" id="IPR038207">
    <property type="entry name" value="DIX_dom_sf"/>
</dbReference>
<dbReference type="InterPro" id="IPR015506">
    <property type="entry name" value="Dsh/Dvl-rel"/>
</dbReference>
<dbReference type="InterPro" id="IPR001478">
    <property type="entry name" value="PDZ"/>
</dbReference>
<dbReference type="InterPro" id="IPR036034">
    <property type="entry name" value="PDZ_sf"/>
</dbReference>
<dbReference type="InterPro" id="IPR029071">
    <property type="entry name" value="Ubiquitin-like_domsf"/>
</dbReference>
<dbReference type="InterPro" id="IPR036388">
    <property type="entry name" value="WH-like_DNA-bd_sf"/>
</dbReference>
<dbReference type="InterPro" id="IPR036390">
    <property type="entry name" value="WH_DNA-bd_sf"/>
</dbReference>
<dbReference type="PANTHER" id="PTHR10878">
    <property type="entry name" value="SEGMENT POLARITY PROTEIN DISHEVELLED"/>
    <property type="match status" value="1"/>
</dbReference>
<dbReference type="PANTHER" id="PTHR10878:SF5">
    <property type="entry name" value="SEGMENT POLARITY PROTEIN DISHEVELLED HOMOLOG DVL-1-RELATED"/>
    <property type="match status" value="1"/>
</dbReference>
<dbReference type="Pfam" id="PF00610">
    <property type="entry name" value="DEP"/>
    <property type="match status" value="1"/>
</dbReference>
<dbReference type="Pfam" id="PF02377">
    <property type="entry name" value="Dishevelled"/>
    <property type="match status" value="1"/>
</dbReference>
<dbReference type="Pfam" id="PF00778">
    <property type="entry name" value="DIX"/>
    <property type="match status" value="1"/>
</dbReference>
<dbReference type="Pfam" id="PF12316">
    <property type="entry name" value="Dsh_C"/>
    <property type="match status" value="1"/>
</dbReference>
<dbReference type="Pfam" id="PF00595">
    <property type="entry name" value="PDZ"/>
    <property type="match status" value="1"/>
</dbReference>
<dbReference type="PRINTS" id="PR01760">
    <property type="entry name" value="DISHEVELLED"/>
</dbReference>
<dbReference type="PRINTS" id="PR01761">
    <property type="entry name" value="DISHEVELLED1"/>
</dbReference>
<dbReference type="SMART" id="SM00021">
    <property type="entry name" value="DAX"/>
    <property type="match status" value="1"/>
</dbReference>
<dbReference type="SMART" id="SM00049">
    <property type="entry name" value="DEP"/>
    <property type="match status" value="1"/>
</dbReference>
<dbReference type="SMART" id="SM00228">
    <property type="entry name" value="PDZ"/>
    <property type="match status" value="1"/>
</dbReference>
<dbReference type="SUPFAM" id="SSF50156">
    <property type="entry name" value="PDZ domain-like"/>
    <property type="match status" value="1"/>
</dbReference>
<dbReference type="SUPFAM" id="SSF54236">
    <property type="entry name" value="Ubiquitin-like"/>
    <property type="match status" value="1"/>
</dbReference>
<dbReference type="SUPFAM" id="SSF46785">
    <property type="entry name" value="Winged helix' DNA-binding domain"/>
    <property type="match status" value="1"/>
</dbReference>
<dbReference type="PROSITE" id="PS50186">
    <property type="entry name" value="DEP"/>
    <property type="match status" value="1"/>
</dbReference>
<dbReference type="PROSITE" id="PS50841">
    <property type="entry name" value="DIX"/>
    <property type="match status" value="1"/>
</dbReference>
<dbReference type="PROSITE" id="PS50106">
    <property type="entry name" value="PDZ"/>
    <property type="match status" value="1"/>
</dbReference>
<protein>
    <recommendedName>
        <fullName>Segment polarity protein dishevelled homolog DVL-1</fullName>
        <shortName>Dishevelled-1</shortName>
    </recommendedName>
    <alternativeName>
        <fullName>DSH homolog 1</fullName>
    </alternativeName>
</protein>
<evidence type="ECO:0000250" key="1"/>
<evidence type="ECO:0000250" key="2">
    <source>
        <dbReference type="UniProtKB" id="O14640"/>
    </source>
</evidence>
<evidence type="ECO:0000250" key="3">
    <source>
        <dbReference type="UniProtKB" id="Q9WVB9"/>
    </source>
</evidence>
<evidence type="ECO:0000255" key="4">
    <source>
        <dbReference type="PROSITE-ProRule" id="PRU00066"/>
    </source>
</evidence>
<evidence type="ECO:0000255" key="5">
    <source>
        <dbReference type="PROSITE-ProRule" id="PRU00069"/>
    </source>
</evidence>
<evidence type="ECO:0000255" key="6">
    <source>
        <dbReference type="PROSITE-ProRule" id="PRU00143"/>
    </source>
</evidence>
<evidence type="ECO:0000256" key="7">
    <source>
        <dbReference type="SAM" id="MobiDB-lite"/>
    </source>
</evidence>
<evidence type="ECO:0000269" key="8">
    <source>
    </source>
</evidence>
<evidence type="ECO:0000269" key="9">
    <source>
    </source>
</evidence>
<evidence type="ECO:0000269" key="10">
    <source>
    </source>
</evidence>
<evidence type="ECO:0000269" key="11">
    <source>
    </source>
</evidence>
<evidence type="ECO:0000269" key="12">
    <source>
    </source>
</evidence>
<evidence type="ECO:0000269" key="13">
    <source>
    </source>
</evidence>
<evidence type="ECO:0000269" key="14">
    <source>
    </source>
</evidence>
<evidence type="ECO:0000269" key="15">
    <source>
    </source>
</evidence>
<evidence type="ECO:0000269" key="16">
    <source>
    </source>
</evidence>
<evidence type="ECO:0000269" key="17">
    <source>
    </source>
</evidence>
<evidence type="ECO:0000269" key="18">
    <source>
    </source>
</evidence>
<evidence type="ECO:0000269" key="19">
    <source>
    </source>
</evidence>
<evidence type="ECO:0000269" key="20">
    <source>
    </source>
</evidence>
<evidence type="ECO:0000305" key="21"/>
<evidence type="ECO:0007829" key="22">
    <source>
        <dbReference type="PDB" id="1FSH"/>
    </source>
</evidence>
<evidence type="ECO:0007829" key="23">
    <source>
        <dbReference type="PDB" id="1MC7"/>
    </source>
</evidence>
<evidence type="ECO:0007829" key="24">
    <source>
        <dbReference type="PDB" id="2KAW"/>
    </source>
</evidence>
<evidence type="ECO:0007829" key="25">
    <source>
        <dbReference type="PDB" id="3PZ8"/>
    </source>
</evidence>
<name>DVL1_MOUSE</name>